<evidence type="ECO:0000255" key="1">
    <source>
        <dbReference type="HAMAP-Rule" id="MF_01527"/>
    </source>
</evidence>
<name>MPTA_AERPE</name>
<dbReference type="EC" id="3.5.4.39" evidence="1"/>
<dbReference type="EMBL" id="BA000002">
    <property type="protein sequence ID" value="BAA81320.1"/>
    <property type="molecule type" value="Genomic_DNA"/>
</dbReference>
<dbReference type="PIR" id="H72457">
    <property type="entry name" value="H72457"/>
</dbReference>
<dbReference type="RefSeq" id="WP_010866927.1">
    <property type="nucleotide sequence ID" value="NC_000854.2"/>
</dbReference>
<dbReference type="SMR" id="Q9Y9I0"/>
<dbReference type="STRING" id="272557.APE_2308"/>
<dbReference type="EnsemblBacteria" id="BAA81320">
    <property type="protein sequence ID" value="BAA81320"/>
    <property type="gene ID" value="APE_2308"/>
</dbReference>
<dbReference type="GeneID" id="1445335"/>
<dbReference type="KEGG" id="ape:APE_2308"/>
<dbReference type="eggNOG" id="arCOG04301">
    <property type="taxonomic scope" value="Archaea"/>
</dbReference>
<dbReference type="UniPathway" id="UPA00065"/>
<dbReference type="Proteomes" id="UP000002518">
    <property type="component" value="Chromosome"/>
</dbReference>
<dbReference type="GO" id="GO:0003934">
    <property type="term" value="F:GTP cyclohydrolase I activity"/>
    <property type="evidence" value="ECO:0007669"/>
    <property type="project" value="InterPro"/>
</dbReference>
<dbReference type="GO" id="GO:0044682">
    <property type="term" value="F:GTP cyclohydrolase IV activity"/>
    <property type="evidence" value="ECO:0007669"/>
    <property type="project" value="UniProtKB-UniRule"/>
</dbReference>
<dbReference type="GO" id="GO:0005506">
    <property type="term" value="F:iron ion binding"/>
    <property type="evidence" value="ECO:0007669"/>
    <property type="project" value="UniProtKB-UniRule"/>
</dbReference>
<dbReference type="GO" id="GO:2001118">
    <property type="term" value="P:tetrahydromethanopterin biosynthetic process"/>
    <property type="evidence" value="ECO:0007669"/>
    <property type="project" value="UniProtKB-UniRule"/>
</dbReference>
<dbReference type="Gene3D" id="3.10.270.10">
    <property type="entry name" value="Urate Oxidase"/>
    <property type="match status" value="1"/>
</dbReference>
<dbReference type="HAMAP" id="MF_01527_A">
    <property type="entry name" value="GTP_cyclohydrol_A"/>
    <property type="match status" value="1"/>
</dbReference>
<dbReference type="InterPro" id="IPR003801">
    <property type="entry name" value="GTP_cyclohydrolase_FolE2/MptA"/>
</dbReference>
<dbReference type="InterPro" id="IPR022840">
    <property type="entry name" value="GTP_cyclohydrolase_MptA"/>
</dbReference>
<dbReference type="NCBIfam" id="TIGR00294">
    <property type="entry name" value="GTP cyclohydrolase MptA"/>
    <property type="match status" value="1"/>
</dbReference>
<dbReference type="PANTHER" id="PTHR36445">
    <property type="entry name" value="GTP CYCLOHYDROLASE MPTA"/>
    <property type="match status" value="1"/>
</dbReference>
<dbReference type="PANTHER" id="PTHR36445:SF1">
    <property type="entry name" value="GTP CYCLOHYDROLASE MPTA"/>
    <property type="match status" value="1"/>
</dbReference>
<dbReference type="Pfam" id="PF02649">
    <property type="entry name" value="GCHY-1"/>
    <property type="match status" value="1"/>
</dbReference>
<reference key="1">
    <citation type="journal article" date="1999" name="DNA Res.">
        <title>Complete genome sequence of an aerobic hyper-thermophilic crenarchaeon, Aeropyrum pernix K1.</title>
        <authorList>
            <person name="Kawarabayasi Y."/>
            <person name="Hino Y."/>
            <person name="Horikawa H."/>
            <person name="Yamazaki S."/>
            <person name="Haikawa Y."/>
            <person name="Jin-no K."/>
            <person name="Takahashi M."/>
            <person name="Sekine M."/>
            <person name="Baba S."/>
            <person name="Ankai A."/>
            <person name="Kosugi H."/>
            <person name="Hosoyama A."/>
            <person name="Fukui S."/>
            <person name="Nagai Y."/>
            <person name="Nishijima K."/>
            <person name="Nakazawa H."/>
            <person name="Takamiya M."/>
            <person name="Masuda S."/>
            <person name="Funahashi T."/>
            <person name="Tanaka T."/>
            <person name="Kudoh Y."/>
            <person name="Yamazaki J."/>
            <person name="Kushida N."/>
            <person name="Oguchi A."/>
            <person name="Aoki K."/>
            <person name="Kubota K."/>
            <person name="Nakamura Y."/>
            <person name="Nomura N."/>
            <person name="Sako Y."/>
            <person name="Kikuchi H."/>
        </authorList>
    </citation>
    <scope>NUCLEOTIDE SEQUENCE [LARGE SCALE GENOMIC DNA]</scope>
    <source>
        <strain>ATCC 700893 / DSM 11879 / JCM 9820 / NBRC 100138 / K1</strain>
    </source>
</reference>
<feature type="chain" id="PRO_0000147738" description="GTP cyclohydrolase MptA">
    <location>
        <begin position="1"/>
        <end position="283"/>
    </location>
</feature>
<feature type="site" description="May be catalytically important" evidence="1">
    <location>
        <position position="147"/>
    </location>
</feature>
<accession>Q9Y9I0</accession>
<keyword id="KW-0378">Hydrolase</keyword>
<keyword id="KW-0408">Iron</keyword>
<keyword id="KW-0479">Metal-binding</keyword>
<keyword id="KW-1185">Reference proteome</keyword>
<comment type="function">
    <text evidence="1">Converts GTP to 7,8-dihydro-D-neopterin 2',3'-cyclic phosphate, the first intermediate in the biosynthesis of coenzyme methanopterin.</text>
</comment>
<comment type="catalytic activity">
    <reaction evidence="1">
        <text>GTP + H2O = 7,8-dihydroneopterin 2',3'-cyclic phosphate + formate + diphosphate + H(+)</text>
        <dbReference type="Rhea" id="RHEA:25860"/>
        <dbReference type="ChEBI" id="CHEBI:15377"/>
        <dbReference type="ChEBI" id="CHEBI:15378"/>
        <dbReference type="ChEBI" id="CHEBI:15740"/>
        <dbReference type="ChEBI" id="CHEBI:33019"/>
        <dbReference type="ChEBI" id="CHEBI:37565"/>
        <dbReference type="ChEBI" id="CHEBI:58854"/>
        <dbReference type="EC" id="3.5.4.39"/>
    </reaction>
</comment>
<comment type="cofactor">
    <cofactor evidence="1">
        <name>Fe(2+)</name>
        <dbReference type="ChEBI" id="CHEBI:29033"/>
    </cofactor>
    <text evidence="1">Binds 1 Fe(2+) ion per subunit.</text>
</comment>
<comment type="pathway">
    <text evidence="1">Cofactor biosynthesis; 5,6,7,8-tetrahydromethanopterin biosynthesis.</text>
</comment>
<comment type="subunit">
    <text evidence="1">Homodimer.</text>
</comment>
<comment type="similarity">
    <text evidence="1">Belongs to the GTP cyclohydrolase IV family.</text>
</comment>
<organism>
    <name type="scientific">Aeropyrum pernix (strain ATCC 700893 / DSM 11879 / JCM 9820 / NBRC 100138 / K1)</name>
    <dbReference type="NCBI Taxonomy" id="272557"/>
    <lineage>
        <taxon>Archaea</taxon>
        <taxon>Thermoproteota</taxon>
        <taxon>Thermoprotei</taxon>
        <taxon>Desulfurococcales</taxon>
        <taxon>Desulfurococcaceae</taxon>
        <taxon>Aeropyrum</taxon>
    </lineage>
</organism>
<gene>
    <name evidence="1" type="primary">mptA</name>
    <name type="ordered locus">APE_2308</name>
</gene>
<sequence length="283" mass="31307">MDVQDLKPPKPLYLERVGFRGVRRRALLETPEGPVTLDLELDVFVDLDRSKRGVHLSRNIEAVEAVVSERRARSIEGLLRSIAKELLSRHGYAEKATVRARTRYYIDLEAAGVKGREPVDVAVTVSLTRSGGERWRVAVSVKGMTVCPSAQSTIAEAEGISDPSRAPSHSQKVLLKGTVDTGKVMVRIEDLARALLQSFSAPTFTLLKKPQEARLILEAFTRPMFVEDVVREAAWRIAAIPYIPGEALLQVEAVSLESIHPHDLVAMLRSRVSEVRSLASRSV</sequence>
<proteinExistence type="inferred from homology"/>
<protein>
    <recommendedName>
        <fullName evidence="1">GTP cyclohydrolase MptA</fullName>
        <ecNumber evidence="1">3.5.4.39</ecNumber>
    </recommendedName>
    <alternativeName>
        <fullName evidence="1">GTP cyclohydrolase IV</fullName>
    </alternativeName>
</protein>